<gene>
    <name type="primary">6</name>
    <name type="synonym">siz</name>
</gene>
<evidence type="ECO:0000250" key="1">
    <source>
        <dbReference type="UniProtKB" id="P03710"/>
    </source>
</evidence>
<evidence type="ECO:0000256" key="2">
    <source>
        <dbReference type="SAM" id="MobiDB-lite"/>
    </source>
</evidence>
<evidence type="ECO:0000269" key="3">
    <source>
    </source>
</evidence>
<evidence type="ECO:0000269" key="4">
    <source>
    </source>
</evidence>
<evidence type="ECO:0000269" key="5">
    <source>
    </source>
</evidence>
<evidence type="ECO:0000269" key="6">
    <source>
    </source>
</evidence>
<evidence type="ECO:0000269" key="7">
    <source>
    </source>
</evidence>
<evidence type="ECO:0000305" key="8"/>
<evidence type="ECO:0000305" key="9">
    <source>
    </source>
</evidence>
<evidence type="ECO:0007744" key="10">
    <source>
        <dbReference type="PDB" id="2JES"/>
    </source>
</evidence>
<evidence type="ECO:0007744" key="11">
    <source>
        <dbReference type="PDB" id="5A20"/>
    </source>
</evidence>
<evidence type="ECO:0007744" key="12">
    <source>
        <dbReference type="PDB" id="5A21"/>
    </source>
</evidence>
<evidence type="ECO:0007829" key="13">
    <source>
        <dbReference type="PDB" id="7Z4W"/>
    </source>
</evidence>
<organism>
    <name type="scientific">Bacillus phage SPP1</name>
    <name type="common">Bacteriophage SPP1</name>
    <dbReference type="NCBI Taxonomy" id="10724"/>
    <lineage>
        <taxon>Viruses</taxon>
        <taxon>Duplodnaviria</taxon>
        <taxon>Heunggongvirae</taxon>
        <taxon>Uroviricota</taxon>
        <taxon>Caudoviricetes</taxon>
    </lineage>
</organism>
<organismHost>
    <name type="scientific">Bacillus subtilis</name>
    <dbReference type="NCBI Taxonomy" id="1423"/>
</organismHost>
<reference key="1">
    <citation type="journal article" date="1992" name="J. Mol. Biol.">
        <title>Identification of a gene in Bacillus subtilis bacteriophage SPP1 determining the amount of packaged DNA.</title>
        <authorList>
            <person name="Tavares P."/>
            <person name="Santos M.A."/>
            <person name="Lurz R."/>
            <person name="Morelli G."/>
            <person name="de Lencastre H."/>
            <person name="Trautner T.A."/>
        </authorList>
    </citation>
    <scope>NUCLEOTIDE SEQUENCE [GENOMIC DNA]</scope>
    <scope>CHARACTERIZATION</scope>
    <scope>MUTAGENESIS OF GLU-251; ASN-365 AND GLU-424</scope>
</reference>
<reference key="2">
    <citation type="journal article" date="1997" name="Gene">
        <title>The complete nucleotide sequence and functional organization of Bacillus subtilis bacteriophage SPP1.</title>
        <authorList>
            <person name="Alonso J.C."/>
            <person name="Luder G."/>
            <person name="Stiege A.C."/>
            <person name="Chai S."/>
            <person name="Weise F."/>
            <person name="Trautner T.A."/>
        </authorList>
    </citation>
    <scope>NUCLEOTIDE SEQUENCE [LARGE SCALE GENOMIC DNA]</scope>
</reference>
<reference key="3">
    <citation type="journal article" date="1992" name="J. Mol. Biol.">
        <title>Molecular analysis of the Bacillus subtilis bacteriophage SPP1 region encompassing genes 1 to 6. The products of gene 1 and gene 2 are required for pac cleavage.</title>
        <authorList>
            <person name="Chai S."/>
            <person name="Bravo A."/>
            <person name="Lueder G."/>
            <person name="Nedlin A."/>
            <person name="Trautner T.A."/>
            <person name="Alonso J.C."/>
        </authorList>
    </citation>
    <scope>NUCLEOTIDE SEQUENCE [GENOMIC DNA] OF 1-37</scope>
</reference>
<reference key="4">
    <citation type="journal article" date="1996" name="EMBO J.">
        <title>Intrinsic versus imposed curvature in cyclical oligomers: the portal protein of bacteriophage SPP1.</title>
        <authorList>
            <person name="van Heel M."/>
            <person name="Orlova E.V."/>
            <person name="Dube P."/>
            <person name="Tavares P."/>
        </authorList>
    </citation>
    <scope>SUBUNIT</scope>
</reference>
<reference key="5">
    <citation type="journal article" date="2000" name="J. Mol. Biol.">
        <title>Shape and DNA packaging activity of bacteriophage SPP1 procapsid: protein components and interactions during assembly.</title>
        <authorList>
            <person name="Droege A."/>
            <person name="Santos M.A."/>
            <person name="Stiege A.C."/>
            <person name="Alonso J.C."/>
            <person name="Lurz R."/>
            <person name="Trautner T.A."/>
            <person name="Tavares P."/>
        </authorList>
    </citation>
    <scope>FUNCTION</scope>
    <scope>INTERACTION WITH THE GP7 PROTEIN</scope>
</reference>
<reference key="6">
    <citation type="journal article" date="2003" name="Mol. Microbiol.">
        <title>Specific targeting of a DNA-binding protein to the SPP1 procapsid by interaction with the portal oligomer.</title>
        <authorList>
            <person name="Stiege A.C."/>
            <person name="Isidro A."/>
            <person name="Droege A."/>
            <person name="Tavares P."/>
        </authorList>
    </citation>
    <scope>INTERACTION WITH THE GP7 PROTEIN</scope>
</reference>
<reference key="7">
    <citation type="journal article" date="2004" name="Mol. Microbiol.">
        <title>The high-resolution functional map of bacteriophage SPP1 portal protein.</title>
        <authorList>
            <person name="Isidro A."/>
            <person name="Santos M.A."/>
            <person name="Henriques A.O."/>
            <person name="Tavares P."/>
        </authorList>
    </citation>
    <scope>FUNCTION</scope>
</reference>
<reference evidence="10" key="8">
    <citation type="journal article" date="2007" name="EMBO J.">
        <title>Structural framework for DNA translocation via the viral portal protein.</title>
        <authorList>
            <person name="Lebedev A.A."/>
            <person name="Krause M.H."/>
            <person name="Isidro A.L."/>
            <person name="Vagin A.A."/>
            <person name="Orlova E.V."/>
            <person name="Turner J."/>
            <person name="Dodson E.J."/>
            <person name="Tavares P."/>
            <person name="Antson A.A."/>
        </authorList>
    </citation>
    <scope>X-RAY CRYSTALLOGRAPHY (3.40 ANGSTROMS)</scope>
    <scope>SUBUNIT</scope>
    <scope>FUNCTION</scope>
</reference>
<reference evidence="11 12" key="9">
    <citation type="journal article" date="2015" name="Proc. Natl. Acad. Sci. U.S.A.">
        <title>Structural rearrangements in the phage head-to-tail interface during assembly and infection.</title>
        <authorList>
            <person name="Chaban Y."/>
            <person name="Lurz R."/>
            <person name="Brasiles S."/>
            <person name="Cornilleau C."/>
            <person name="Karreman M."/>
            <person name="Zinn-Justin S."/>
            <person name="Tavares P."/>
            <person name="Orlova E.V."/>
        </authorList>
    </citation>
    <scope>STRUCTURE BY ELECTRON MICROSCOPY (7.20 ANGSTROMS)</scope>
    <scope>INTERACTION WITH THE CONNECTOR PROTEIN GP15</scope>
</reference>
<accession>P54309</accession>
<keyword id="KW-0002">3D-structure</keyword>
<keyword id="KW-0167">Capsid protein</keyword>
<keyword id="KW-1185">Reference proteome</keyword>
<keyword id="KW-0118">Viral capsid assembly</keyword>
<keyword id="KW-1171">Viral genome ejection through host cell envelope</keyword>
<keyword id="KW-0231">Viral genome packaging</keyword>
<keyword id="KW-1243">Viral long flexible tail ejection system</keyword>
<keyword id="KW-1162">Viral penetration into host cytoplasm</keyword>
<keyword id="KW-1188">Viral release from host cell</keyword>
<keyword id="KW-0946">Virion</keyword>
<keyword id="KW-1160">Virus entry into host cell</keyword>
<comment type="function">
    <text evidence="5 9">Forms the portal vertex of the capsid (PubMed:17363899). This portal plays critical roles in head assembly, genome packaging, neck/tail attachment, and genome ejection. The portal protein multimerizes as a single ring-shaped homododecamer arranged around a central channel. Binds to the terminase subunits to form the packaging machine. Necessary to ensure correct procapsid size during capsid assembly. Once the capsid is packaged with the DNA, the terminase complex is substituted by the connector proteins gp15.</text>
</comment>
<comment type="subunit">
    <text evidence="3 4 5 6 7">Homododecamer (PubMed:17363899, PubMed:8890151). Has been seen as 13-mer and 14-mer multimer in experiments, but assembles as homododecamer in vivo (PubMed:17363899, PubMed:8890151). Interacts with the gp7 protein (PubMed:10656821, PubMed:12940981). Interacts with the connector proteins gp15; this interaction occurs at the end of the packaging when the terminase complex is replaced by the connector (PubMed:25991862).</text>
</comment>
<comment type="subcellular location">
    <subcellularLocation>
        <location evidence="1">Virion</location>
    </subcellularLocation>
</comment>
<comment type="similarity">
    <text evidence="8">Belongs to the SPP1-like portal protein family.</text>
</comment>
<protein>
    <recommendedName>
        <fullName evidence="8">Portal protein</fullName>
    </recommendedName>
    <alternativeName>
        <fullName evidence="8">Gene product 6</fullName>
        <shortName>gp6</shortName>
    </alternativeName>
    <alternativeName>
        <fullName evidence="8">Portal vertex protein</fullName>
    </alternativeName>
</protein>
<name>PORTL_BPSPP</name>
<proteinExistence type="evidence at protein level"/>
<dbReference type="EMBL" id="X56064">
    <property type="protein sequence ID" value="CAA39541.1"/>
    <property type="molecule type" value="Genomic_DNA"/>
</dbReference>
<dbReference type="EMBL" id="X97918">
    <property type="protein sequence ID" value="CAA66580.1"/>
    <property type="molecule type" value="Genomic_DNA"/>
</dbReference>
<dbReference type="PIR" id="S21805">
    <property type="entry name" value="S21805"/>
</dbReference>
<dbReference type="RefSeq" id="NP_690661.1">
    <property type="nucleotide sequence ID" value="NC_004166.2"/>
</dbReference>
<dbReference type="PDB" id="2JES">
    <property type="method" value="X-ray"/>
    <property type="resolution" value="3.40 A"/>
    <property type="chains" value="A/C/E/G/I/K/M/O/Q/S/U/W/Y=1-503"/>
</dbReference>
<dbReference type="PDB" id="5A20">
    <property type="method" value="EM"/>
    <property type="resolution" value="7.60 A"/>
    <property type="chains" value="A/B=1-503"/>
</dbReference>
<dbReference type="PDB" id="5A21">
    <property type="method" value="EM"/>
    <property type="resolution" value="7.20 A"/>
    <property type="chains" value="A/B=1-503"/>
</dbReference>
<dbReference type="PDB" id="7Z4W">
    <property type="method" value="EM"/>
    <property type="resolution" value="2.70 A"/>
    <property type="chains" value="A/B/C/D/E/F/G/H/I/J/K/L=1-503"/>
</dbReference>
<dbReference type="PDBsum" id="2JES"/>
<dbReference type="PDBsum" id="5A20"/>
<dbReference type="PDBsum" id="5A21"/>
<dbReference type="PDBsum" id="7Z4W"/>
<dbReference type="EMDB" id="EMD-14509"/>
<dbReference type="EMDB" id="EMD-2993"/>
<dbReference type="EMDB" id="EMD-2994"/>
<dbReference type="SMR" id="P54309"/>
<dbReference type="TCDB" id="1.W.7.1.1">
    <property type="family name" value="the (bacillus phage spp1) portal protein 7 (ppp7) family"/>
</dbReference>
<dbReference type="KEGG" id="vg:955279"/>
<dbReference type="OrthoDB" id="2060at10239"/>
<dbReference type="EvolutionaryTrace" id="P54309"/>
<dbReference type="Proteomes" id="UP000002559">
    <property type="component" value="Genome"/>
</dbReference>
<dbReference type="GO" id="GO:0046798">
    <property type="term" value="C:viral portal complex"/>
    <property type="evidence" value="ECO:0000314"/>
    <property type="project" value="UniProtKB"/>
</dbReference>
<dbReference type="GO" id="GO:0046729">
    <property type="term" value="C:viral procapsid"/>
    <property type="evidence" value="ECO:0000314"/>
    <property type="project" value="CACAO"/>
</dbReference>
<dbReference type="GO" id="GO:0099001">
    <property type="term" value="P:symbiont genome ejection through host cell envelope, long flexible tail mechanism"/>
    <property type="evidence" value="ECO:0007669"/>
    <property type="project" value="UniProtKB-KW"/>
</dbReference>
<dbReference type="GO" id="GO:0098006">
    <property type="term" value="P:viral DNA genome packaging, headful"/>
    <property type="evidence" value="ECO:0000315"/>
    <property type="project" value="CACAO"/>
</dbReference>
<dbReference type="InterPro" id="IPR021145">
    <property type="entry name" value="Portal_protein_SPP1_Gp6-like"/>
</dbReference>
<dbReference type="InterPro" id="IPR006428">
    <property type="entry name" value="Portal_SPP1-type"/>
</dbReference>
<dbReference type="NCBIfam" id="TIGR01538">
    <property type="entry name" value="portal_SPP1"/>
    <property type="match status" value="1"/>
</dbReference>
<dbReference type="Pfam" id="PF05133">
    <property type="entry name" value="SPP1_portal"/>
    <property type="match status" value="1"/>
</dbReference>
<sequence>MADIYPLGKTHTEELNEIIVESAKEIAEPDTTMIQKLIDEHNPEPLLKGVRYYMCENDIEKKRRTYYDAAGQQLVDDTKTNNRTSHAWHKLFVDQKTQYLVGEPVTFTSDNKTLLEYVNELADDDFDDILNETVKNMSNKGIEYWHPFVDEEGEFDYVIFPAEEMIVVYKDNTRRDILFALRYYSYKGIMGEETQKAELYTDTHVYYYEKIDGVYQMDYSYGENNPRPHMTKGGQAIGWGRVPIIPFKNNEEMVSDLKFYKDLIDNYDSITSSTMDSFSDFQQIVYVLKNYDGENPKEFTANLRYHSVIKVSGDGGVDTLRAEIPVDSAAKELERIQDELYKSAQAVDNSPETIGGGATGPALENLYALLDLKANMAERKIRAGLRLFFWFFAEYLRNTGKGDFNPDKELTMTFTRTRIQNDSEIVQSLVQGVTGGIMSKETAVARNPFVQDPEEELARIEEEMNQYAEMQGNLLDDEGGDDDLEEDDPNAGAAESGGAGQVS</sequence>
<feature type="chain" id="PRO_0000077792" description="Portal protein">
    <location>
        <begin position="1"/>
        <end position="503"/>
    </location>
</feature>
<feature type="region of interest" description="Disordered" evidence="2">
    <location>
        <begin position="463"/>
        <end position="503"/>
    </location>
</feature>
<feature type="compositionally biased region" description="Acidic residues" evidence="2">
    <location>
        <begin position="475"/>
        <end position="489"/>
    </location>
</feature>
<feature type="mutagenesis site" description="In siz S; 4% reduction in DNA packaging.">
    <original>E</original>
    <variation>K</variation>
    <location>
        <position position="251"/>
    </location>
</feature>
<feature type="mutagenesis site" description="In siz A; 6% reduction in DNA packaging.">
    <original>N</original>
    <variation>K</variation>
    <location>
        <position position="365"/>
    </location>
</feature>
<feature type="mutagenesis site" description="In siz X; 6% reduction in DNA packaging.">
    <original>E</original>
    <variation>K</variation>
    <location>
        <position position="424"/>
    </location>
</feature>
<feature type="helix" evidence="13">
    <location>
        <begin position="32"/>
        <end position="39"/>
    </location>
</feature>
<feature type="turn" evidence="13">
    <location>
        <begin position="44"/>
        <end position="46"/>
    </location>
</feature>
<feature type="helix" evidence="13">
    <location>
        <begin position="48"/>
        <end position="53"/>
    </location>
</feature>
<feature type="helix" evidence="13">
    <location>
        <begin position="58"/>
        <end position="61"/>
    </location>
</feature>
<feature type="strand" evidence="13">
    <location>
        <begin position="65"/>
        <end position="67"/>
    </location>
</feature>
<feature type="strand" evidence="13">
    <location>
        <begin position="73"/>
        <end position="75"/>
    </location>
</feature>
<feature type="strand" evidence="13">
    <location>
        <begin position="77"/>
        <end position="79"/>
    </location>
</feature>
<feature type="helix" evidence="13">
    <location>
        <begin position="88"/>
        <end position="101"/>
    </location>
</feature>
<feature type="strand" evidence="13">
    <location>
        <begin position="106"/>
        <end position="110"/>
    </location>
</feature>
<feature type="helix" evidence="13">
    <location>
        <begin position="112"/>
        <end position="121"/>
    </location>
</feature>
<feature type="helix" evidence="13">
    <location>
        <begin position="124"/>
        <end position="140"/>
    </location>
</feature>
<feature type="strand" evidence="13">
    <location>
        <begin position="141"/>
        <end position="149"/>
    </location>
</feature>
<feature type="strand" evidence="13">
    <location>
        <begin position="155"/>
        <end position="160"/>
    </location>
</feature>
<feature type="helix" evidence="13">
    <location>
        <begin position="162"/>
        <end position="164"/>
    </location>
</feature>
<feature type="strand" evidence="13">
    <location>
        <begin position="165"/>
        <end position="169"/>
    </location>
</feature>
<feature type="turn" evidence="13">
    <location>
        <begin position="171"/>
        <end position="173"/>
    </location>
</feature>
<feature type="strand" evidence="13">
    <location>
        <begin position="174"/>
        <end position="186"/>
    </location>
</feature>
<feature type="strand" evidence="13">
    <location>
        <begin position="194"/>
        <end position="200"/>
    </location>
</feature>
<feature type="strand" evidence="13">
    <location>
        <begin position="202"/>
        <end position="217"/>
    </location>
</feature>
<feature type="strand" evidence="13">
    <location>
        <begin position="225"/>
        <end position="228"/>
    </location>
</feature>
<feature type="strand" evidence="13">
    <location>
        <begin position="230"/>
        <end position="234"/>
    </location>
</feature>
<feature type="strand" evidence="13">
    <location>
        <begin position="245"/>
        <end position="250"/>
    </location>
</feature>
<feature type="helix" evidence="13">
    <location>
        <begin position="256"/>
        <end position="259"/>
    </location>
</feature>
<feature type="helix" evidence="13">
    <location>
        <begin position="261"/>
        <end position="280"/>
    </location>
</feature>
<feature type="strand" evidence="13">
    <location>
        <begin position="283"/>
        <end position="290"/>
    </location>
</feature>
<feature type="helix" evidence="13">
    <location>
        <begin position="296"/>
        <end position="306"/>
    </location>
</feature>
<feature type="strand" evidence="13">
    <location>
        <begin position="308"/>
        <end position="311"/>
    </location>
</feature>
<feature type="strand" evidence="13">
    <location>
        <begin position="316"/>
        <end position="321"/>
    </location>
</feature>
<feature type="helix" evidence="13">
    <location>
        <begin position="327"/>
        <end position="344"/>
    </location>
</feature>
<feature type="helix" evidence="13">
    <location>
        <begin position="351"/>
        <end position="356"/>
    </location>
</feature>
<feature type="helix" evidence="13">
    <location>
        <begin position="360"/>
        <end position="366"/>
    </location>
</feature>
<feature type="helix" evidence="13">
    <location>
        <begin position="368"/>
        <end position="398"/>
    </location>
</feature>
<feature type="helix" evidence="13">
    <location>
        <begin position="406"/>
        <end position="409"/>
    </location>
</feature>
<feature type="strand" evidence="13">
    <location>
        <begin position="410"/>
        <end position="413"/>
    </location>
</feature>
<feature type="helix" evidence="13">
    <location>
        <begin position="422"/>
        <end position="434"/>
    </location>
</feature>
<feature type="helix" evidence="13">
    <location>
        <begin position="440"/>
        <end position="445"/>
    </location>
</feature>
<feature type="helix" evidence="13">
    <location>
        <begin position="453"/>
        <end position="468"/>
    </location>
</feature>